<feature type="chain" id="PRO_0000395887" description="Ribonuclease J">
    <location>
        <begin position="1"/>
        <end position="558"/>
    </location>
</feature>
<feature type="region of interest" description="Not absolutely required for RNase activity">
    <location>
        <begin position="1"/>
        <end position="269"/>
    </location>
</feature>
<feature type="region of interest" description="Required for beta-lactamase activity">
    <location>
        <begin position="451"/>
        <end position="558"/>
    </location>
</feature>
<feature type="binding site" evidence="2">
    <location>
        <position position="81"/>
    </location>
    <ligand>
        <name>Zn(2+)</name>
        <dbReference type="ChEBI" id="CHEBI:29105"/>
        <label>1</label>
        <note>catalytic</note>
    </ligand>
</feature>
<feature type="binding site" evidence="2">
    <location>
        <position position="83"/>
    </location>
    <ligand>
        <name>Zn(2+)</name>
        <dbReference type="ChEBI" id="CHEBI:29105"/>
        <label>1</label>
        <note>catalytic</note>
    </ligand>
</feature>
<feature type="binding site" evidence="2">
    <location>
        <position position="85"/>
    </location>
    <ligand>
        <name>Zn(2+)</name>
        <dbReference type="ChEBI" id="CHEBI:29105"/>
        <label>2</label>
        <note>catalytic</note>
    </ligand>
</feature>
<feature type="binding site" evidence="2">
    <location>
        <position position="86"/>
    </location>
    <ligand>
        <name>Zn(2+)</name>
        <dbReference type="ChEBI" id="CHEBI:29105"/>
        <label>2</label>
        <note>catalytic</note>
    </ligand>
</feature>
<feature type="binding site" evidence="2">
    <location>
        <position position="148"/>
    </location>
    <ligand>
        <name>Zn(2+)</name>
        <dbReference type="ChEBI" id="CHEBI:29105"/>
        <label>1</label>
        <note>catalytic</note>
    </ligand>
</feature>
<feature type="binding site" evidence="2">
    <location>
        <position position="170"/>
    </location>
    <ligand>
        <name>Zn(2+)</name>
        <dbReference type="ChEBI" id="CHEBI:29105"/>
        <label>1</label>
        <note>catalytic</note>
    </ligand>
</feature>
<feature type="binding site" evidence="2">
    <location>
        <position position="170"/>
    </location>
    <ligand>
        <name>Zn(2+)</name>
        <dbReference type="ChEBI" id="CHEBI:29105"/>
        <label>2</label>
        <note>catalytic</note>
    </ligand>
</feature>
<feature type="binding site" evidence="2">
    <location>
        <begin position="371"/>
        <end position="375"/>
    </location>
    <ligand>
        <name>substrate</name>
    </ligand>
</feature>
<feature type="binding site" evidence="2">
    <location>
        <position position="397"/>
    </location>
    <ligand>
        <name>Zn(2+)</name>
        <dbReference type="ChEBI" id="CHEBI:29105"/>
        <label>2</label>
        <note>catalytic</note>
    </ligand>
</feature>
<feature type="cross-link" description="Isoglutamyl lysine isopeptide (Lys-Gln) (interchain with Q-Cter in protein Pup)" evidence="3">
    <location>
        <position position="502"/>
    </location>
</feature>
<feature type="mutagenesis site" description="Significantly decreased beta-lactamase and RNase activity." evidence="4">
    <original>D</original>
    <variation>A</variation>
    <location>
        <position position="184"/>
    </location>
</feature>
<feature type="mutagenesis site" description="Significantly decreased beta-lactamase and RNase activity." evidence="4">
    <original>H</original>
    <variation>V</variation>
    <location>
        <position position="397"/>
    </location>
</feature>
<feature type="strand" evidence="5">
    <location>
        <begin position="16"/>
        <end position="28"/>
    </location>
</feature>
<feature type="strand" evidence="5">
    <location>
        <begin position="31"/>
        <end position="36"/>
    </location>
</feature>
<feature type="strand" evidence="5">
    <location>
        <begin position="39"/>
        <end position="43"/>
    </location>
</feature>
<feature type="strand" evidence="5">
    <location>
        <begin position="59"/>
        <end position="61"/>
    </location>
</feature>
<feature type="helix" evidence="5">
    <location>
        <begin position="65"/>
        <end position="68"/>
    </location>
</feature>
<feature type="helix" evidence="5">
    <location>
        <begin position="71"/>
        <end position="73"/>
    </location>
</feature>
<feature type="strand" evidence="5">
    <location>
        <begin position="74"/>
        <end position="78"/>
    </location>
</feature>
<feature type="helix" evidence="5">
    <location>
        <begin position="84"/>
        <end position="87"/>
    </location>
</feature>
<feature type="helix" evidence="5">
    <location>
        <begin position="90"/>
        <end position="96"/>
    </location>
</feature>
<feature type="strand" evidence="5">
    <location>
        <begin position="102"/>
        <end position="104"/>
    </location>
</feature>
<feature type="helix" evidence="5">
    <location>
        <begin position="106"/>
        <end position="117"/>
    </location>
</feature>
<feature type="turn" evidence="5">
    <location>
        <begin position="118"/>
        <end position="120"/>
    </location>
</feature>
<feature type="strand" evidence="5">
    <location>
        <begin position="125"/>
        <end position="127"/>
    </location>
</feature>
<feature type="strand" evidence="5">
    <location>
        <begin position="133"/>
        <end position="136"/>
    </location>
</feature>
<feature type="strand" evidence="5">
    <location>
        <begin position="139"/>
        <end position="147"/>
    </location>
</feature>
<feature type="strand" evidence="5">
    <location>
        <begin position="153"/>
        <end position="160"/>
    </location>
</feature>
<feature type="strand" evidence="5">
    <location>
        <begin position="163"/>
        <end position="167"/>
    </location>
</feature>
<feature type="helix" evidence="5">
    <location>
        <begin position="185"/>
        <end position="194"/>
    </location>
</feature>
<feature type="strand" evidence="5">
    <location>
        <begin position="197"/>
        <end position="202"/>
    </location>
</feature>
<feature type="turn" evidence="6">
    <location>
        <begin position="204"/>
        <end position="207"/>
    </location>
</feature>
<feature type="helix" evidence="5">
    <location>
        <begin position="215"/>
        <end position="217"/>
    </location>
</feature>
<feature type="helix" evidence="5">
    <location>
        <begin position="218"/>
        <end position="228"/>
    </location>
</feature>
<feature type="strand" evidence="5">
    <location>
        <begin position="233"/>
        <end position="236"/>
    </location>
</feature>
<feature type="helix" evidence="5">
    <location>
        <begin position="242"/>
        <end position="254"/>
    </location>
</feature>
<feature type="strand" evidence="5">
    <location>
        <begin position="258"/>
        <end position="263"/>
    </location>
</feature>
<feature type="helix" evidence="5">
    <location>
        <begin position="264"/>
        <end position="275"/>
    </location>
</feature>
<feature type="helix" evidence="5">
    <location>
        <begin position="283"/>
        <end position="285"/>
    </location>
</feature>
<feature type="helix" evidence="5">
    <location>
        <begin position="289"/>
        <end position="294"/>
    </location>
</feature>
<feature type="helix" evidence="5">
    <location>
        <begin position="297"/>
        <end position="299"/>
    </location>
</feature>
<feature type="strand" evidence="5">
    <location>
        <begin position="300"/>
        <end position="304"/>
    </location>
</feature>
<feature type="helix" evidence="5">
    <location>
        <begin position="314"/>
        <end position="319"/>
    </location>
</feature>
<feature type="strand" evidence="5">
    <location>
        <begin position="333"/>
        <end position="336"/>
    </location>
</feature>
<feature type="helix" evidence="5">
    <location>
        <begin position="345"/>
        <end position="358"/>
    </location>
</feature>
<feature type="strand" evidence="5">
    <location>
        <begin position="361"/>
        <end position="363"/>
    </location>
</feature>
<feature type="turn" evidence="5">
    <location>
        <begin position="365"/>
        <end position="367"/>
    </location>
</feature>
<feature type="helix" evidence="5">
    <location>
        <begin position="378"/>
        <end position="388"/>
    </location>
</feature>
<feature type="strand" evidence="5">
    <location>
        <begin position="391"/>
        <end position="398"/>
    </location>
</feature>
<feature type="helix" evidence="5">
    <location>
        <begin position="400"/>
        <end position="412"/>
    </location>
</feature>
<feature type="helix" evidence="5">
    <location>
        <begin position="417"/>
        <end position="419"/>
    </location>
</feature>
<feature type="strand" evidence="5">
    <location>
        <begin position="427"/>
        <end position="432"/>
    </location>
</feature>
<feature type="strand" evidence="5">
    <location>
        <begin position="435"/>
        <end position="441"/>
    </location>
</feature>
<feature type="strand" evidence="5">
    <location>
        <begin position="447"/>
        <end position="450"/>
    </location>
</feature>
<feature type="strand" evidence="5">
    <location>
        <begin position="453"/>
        <end position="456"/>
    </location>
</feature>
<feature type="helix" evidence="5">
    <location>
        <begin position="459"/>
        <end position="467"/>
    </location>
</feature>
<feature type="helix" evidence="5">
    <location>
        <begin position="468"/>
        <end position="470"/>
    </location>
</feature>
<feature type="strand" evidence="5">
    <location>
        <begin position="472"/>
        <end position="474"/>
    </location>
</feature>
<feature type="turn" evidence="6">
    <location>
        <begin position="481"/>
        <end position="483"/>
    </location>
</feature>
<feature type="strand" evidence="5">
    <location>
        <begin position="493"/>
        <end position="497"/>
    </location>
</feature>
<feature type="helix" evidence="5">
    <location>
        <begin position="501"/>
        <end position="504"/>
    </location>
</feature>
<feature type="helix" evidence="5">
    <location>
        <begin position="505"/>
        <end position="515"/>
    </location>
</feature>
<feature type="helix" evidence="5">
    <location>
        <begin position="530"/>
        <end position="544"/>
    </location>
</feature>
<feature type="strand" evidence="5">
    <location>
        <begin position="550"/>
        <end position="552"/>
    </location>
</feature>
<keyword id="KW-0002">3D-structure</keyword>
<keyword id="KW-0963">Cytoplasm</keyword>
<keyword id="KW-0255">Endonuclease</keyword>
<keyword id="KW-0269">Exonuclease</keyword>
<keyword id="KW-0378">Hydrolase</keyword>
<keyword id="KW-1017">Isopeptide bond</keyword>
<keyword id="KW-0479">Metal-binding</keyword>
<keyword id="KW-0540">Nuclease</keyword>
<keyword id="KW-1185">Reference proteome</keyword>
<keyword id="KW-0694">RNA-binding</keyword>
<keyword id="KW-0698">rRNA processing</keyword>
<keyword id="KW-0832">Ubl conjugation</keyword>
<keyword id="KW-0862">Zinc</keyword>
<gene>
    <name evidence="2" type="primary">rnj</name>
    <name type="ordered locus">Rv2752c</name>
</gene>
<reference key="1">
    <citation type="journal article" date="1998" name="Nature">
        <title>Deciphering the biology of Mycobacterium tuberculosis from the complete genome sequence.</title>
        <authorList>
            <person name="Cole S.T."/>
            <person name="Brosch R."/>
            <person name="Parkhill J."/>
            <person name="Garnier T."/>
            <person name="Churcher C.M."/>
            <person name="Harris D.E."/>
            <person name="Gordon S.V."/>
            <person name="Eiglmeier K."/>
            <person name="Gas S."/>
            <person name="Barry C.E. III"/>
            <person name="Tekaia F."/>
            <person name="Badcock K."/>
            <person name="Basham D."/>
            <person name="Brown D."/>
            <person name="Chillingworth T."/>
            <person name="Connor R."/>
            <person name="Davies R.M."/>
            <person name="Devlin K."/>
            <person name="Feltwell T."/>
            <person name="Gentles S."/>
            <person name="Hamlin N."/>
            <person name="Holroyd S."/>
            <person name="Hornsby T."/>
            <person name="Jagels K."/>
            <person name="Krogh A."/>
            <person name="McLean J."/>
            <person name="Moule S."/>
            <person name="Murphy L.D."/>
            <person name="Oliver S."/>
            <person name="Osborne J."/>
            <person name="Quail M.A."/>
            <person name="Rajandream M.A."/>
            <person name="Rogers J."/>
            <person name="Rutter S."/>
            <person name="Seeger K."/>
            <person name="Skelton S."/>
            <person name="Squares S."/>
            <person name="Squares R."/>
            <person name="Sulston J.E."/>
            <person name="Taylor K."/>
            <person name="Whitehead S."/>
            <person name="Barrell B.G."/>
        </authorList>
    </citation>
    <scope>NUCLEOTIDE SEQUENCE [LARGE SCALE GENOMIC DNA]</scope>
    <source>
        <strain>ATCC 25618 / H37Rv</strain>
    </source>
</reference>
<reference key="2">
    <citation type="journal article" date="2010" name="PLoS ONE">
        <title>Prokaryotic ubiquitin-like protein (Pup) proteome of Mycobacterium tuberculosis.</title>
        <authorList>
            <person name="Festa R.A."/>
            <person name="McAllister F."/>
            <person name="Pearce M.J."/>
            <person name="Mintseris J."/>
            <person name="Burns K.E."/>
            <person name="Gygi S.P."/>
            <person name="Darwin K.H."/>
        </authorList>
    </citation>
    <scope>PUPYLATION AT LYS-502</scope>
    <scope>IDENTIFICATION BY MASS SPECTROMETRY</scope>
    <source>
        <strain>ATCC 25618 / H37Rv</strain>
    </source>
</reference>
<reference key="3">
    <citation type="journal article" date="2011" name="Biochemistry (Mosc.)">
        <title>Characterization of a bifunctional beta-lactamase/ribonuclease and its interaction with a chaperone-like protein in the pathogen Mycobacterium tuberculosis H37Rv.</title>
        <authorList>
            <person name="Sun L."/>
            <person name="Zhang L."/>
            <person name="Zhang H."/>
            <person name="He Z.G."/>
        </authorList>
    </citation>
    <scope>FUNCTION AS A BETA-LACTAMASE</scope>
    <scope>FUNCTION AS AN RNASE</scope>
    <scope>ACTIVITY REGULATION</scope>
    <scope>INTERACTION WITH DNAJ2</scope>
    <scope>SUBUNIT</scope>
    <scope>DOMAIN</scope>
    <scope>MUTAGENESIS OF ASP-184 AND HIS-397</scope>
    <source>
        <strain>ATCC 25618 / H37Rv</strain>
    </source>
</reference>
<reference key="4">
    <citation type="journal article" date="2011" name="Mol. Cell. Proteomics">
        <title>Proteogenomic analysis of Mycobacterium tuberculosis by high resolution mass spectrometry.</title>
        <authorList>
            <person name="Kelkar D.S."/>
            <person name="Kumar D."/>
            <person name="Kumar P."/>
            <person name="Balakrishnan L."/>
            <person name="Muthusamy B."/>
            <person name="Yadav A.K."/>
            <person name="Shrivastava P."/>
            <person name="Marimuthu A."/>
            <person name="Anand S."/>
            <person name="Sundaram H."/>
            <person name="Kingsbury R."/>
            <person name="Harsha H.C."/>
            <person name="Nair B."/>
            <person name="Prasad T.S."/>
            <person name="Chauhan D.S."/>
            <person name="Katoch K."/>
            <person name="Katoch V.M."/>
            <person name="Kumar P."/>
            <person name="Chaerkady R."/>
            <person name="Ramachandran S."/>
            <person name="Dash D."/>
            <person name="Pandey A."/>
        </authorList>
    </citation>
    <scope>IDENTIFICATION BY MASS SPECTROMETRY [LARGE SCALE ANALYSIS]</scope>
    <source>
        <strain>ATCC 25618 / H37Rv</strain>
    </source>
</reference>
<comment type="function">
    <text evidence="1 4">An RNase that has 5'-3' exonuclease and possible endonuclease activity. Involved in maturation of rRNA and in some organisms also mRNA maturation and/or decay (By similarity). Has both beta-lactamase and RNase activity, but the physiological relevance of the beta-lactamase activity, i.e. whether it confers antibiotic resistance, has not been shown (PubMed:21568871).</text>
</comment>
<comment type="catalytic activity">
    <reaction>
        <text>a beta-lactam + H2O = a substituted beta-amino acid</text>
        <dbReference type="Rhea" id="RHEA:20401"/>
        <dbReference type="ChEBI" id="CHEBI:15377"/>
        <dbReference type="ChEBI" id="CHEBI:35627"/>
        <dbReference type="ChEBI" id="CHEBI:140347"/>
        <dbReference type="EC" id="3.5.2.6"/>
    </reaction>
</comment>
<comment type="cofactor">
    <cofactor evidence="2">
        <name>Zn(2+)</name>
        <dbReference type="ChEBI" id="CHEBI:29105"/>
    </cofactor>
    <text evidence="2">Binds up to 2 Zn(2+) ions per subunit. It is not clear if Zn(2+) or Mg(2+) is physiologically important.</text>
</comment>
<comment type="activity regulation">
    <text evidence="4">Both beta-lactamase and RNase activities are inhibited by chaperone DnaJ2.</text>
</comment>
<comment type="subunit">
    <text evidence="2 4">Homodimer, may be a subunit of the RNA degradosome (By similarity). Interacts with chaperone DnaJ2.</text>
</comment>
<comment type="subcellular location">
    <subcellularLocation>
        <location evidence="2">Cytoplasm</location>
    </subcellularLocation>
</comment>
<comment type="similarity">
    <text evidence="2">Belongs to the metallo-beta-lactamase superfamily. RNA-metabolizing metallo-beta-lactamase-like family. Bacterial RNase J subfamily.</text>
</comment>
<evidence type="ECO:0000250" key="1"/>
<evidence type="ECO:0000255" key="2">
    <source>
        <dbReference type="HAMAP-Rule" id="MF_01491"/>
    </source>
</evidence>
<evidence type="ECO:0000269" key="3">
    <source>
    </source>
</evidence>
<evidence type="ECO:0000269" key="4">
    <source>
    </source>
</evidence>
<evidence type="ECO:0007829" key="5">
    <source>
        <dbReference type="PDB" id="7WNT"/>
    </source>
</evidence>
<evidence type="ECO:0007829" key="6">
    <source>
        <dbReference type="PDB" id="7WNU"/>
    </source>
</evidence>
<sequence length="558" mass="59533">MDVDLPPPGPLTSGGLRVTALGGINEIGRNMTVFEHLGRLLIIDCGVLFPGHDEPGVDLILPDMRHVEDRLDDIEALVLTHGHEDHIGAIPFLLKLRPDIPVVGSKFTLALVAEKCREYRITPVFVEVREGQSTRHGVFECEYFAVNHSTPDALAIAVYTGAGTILHTGDIKFDQLPPDGRPTDLPGMSRLGDTGVDLLLCDSTNAEIPGVGPSESEVGPTLHRLIRGADGRVIVACFASNVDRVQQIIDAAVALGRRVSFVGRSMVRNMRVARQLGFLRVADSDLIDIAAAETMAPDQVVLITTGTQGEPMSALSRMSRGEHRSITLTAGDLIVLSSSLIPGNEEAVFGVIDALSKIGARVVTNAQARVHVSGHAYAGELLFLYNGVRPRNVMPVHGTWRMLRANAKLAASTGVPQESILLAENGVSVDLVAGKASISGAVPVGKMFVDGLIAGDVGDITLGERLILSSGFVAVTVVVRRGTGQPLAAPHLHSRGFSEDPKALEPAVRKVEAELESLVAANVTDPIRIAQGVRRTVGKWVGETYRRQPMIVPTVIEV</sequence>
<proteinExistence type="evidence at protein level"/>
<protein>
    <recommendedName>
        <fullName evidence="2">Ribonuclease J</fullName>
        <shortName evidence="2">RNase J</shortName>
        <ecNumber evidence="2">3.1.-.-</ecNumber>
    </recommendedName>
    <alternativeName>
        <fullName>Beta-lactamase</fullName>
        <ecNumber>3.5.2.6</ecNumber>
    </alternativeName>
    <alternativeName>
        <fullName>Penicillinase</fullName>
    </alternativeName>
</protein>
<accession>P9WGZ9</accession>
<accession>L0TAS3</accession>
<accession>O33294</accession>
<accession>Q7D6N2</accession>
<organism>
    <name type="scientific">Mycobacterium tuberculosis (strain ATCC 25618 / H37Rv)</name>
    <dbReference type="NCBI Taxonomy" id="83332"/>
    <lineage>
        <taxon>Bacteria</taxon>
        <taxon>Bacillati</taxon>
        <taxon>Actinomycetota</taxon>
        <taxon>Actinomycetes</taxon>
        <taxon>Mycobacteriales</taxon>
        <taxon>Mycobacteriaceae</taxon>
        <taxon>Mycobacterium</taxon>
        <taxon>Mycobacterium tuberculosis complex</taxon>
    </lineage>
</organism>
<name>RNJ_MYCTU</name>
<dbReference type="EC" id="3.1.-.-" evidence="2"/>
<dbReference type="EC" id="3.5.2.6"/>
<dbReference type="EMBL" id="AL123456">
    <property type="protein sequence ID" value="CCP45551.1"/>
    <property type="molecule type" value="Genomic_DNA"/>
</dbReference>
<dbReference type="PIR" id="G70879">
    <property type="entry name" value="G70879"/>
</dbReference>
<dbReference type="RefSeq" id="NP_217268.1">
    <property type="nucleotide sequence ID" value="NC_000962.3"/>
</dbReference>
<dbReference type="RefSeq" id="WP_003414049.1">
    <property type="nucleotide sequence ID" value="NZ_NVQJ01000020.1"/>
</dbReference>
<dbReference type="PDB" id="7WNT">
    <property type="method" value="X-ray"/>
    <property type="resolution" value="2.44 A"/>
    <property type="chains" value="A=1-558"/>
</dbReference>
<dbReference type="PDB" id="7WNU">
    <property type="method" value="X-ray"/>
    <property type="resolution" value="3.20 A"/>
    <property type="chains" value="A/B=1-558"/>
</dbReference>
<dbReference type="PDBsum" id="7WNT"/>
<dbReference type="PDBsum" id="7WNU"/>
<dbReference type="SMR" id="P9WGZ9"/>
<dbReference type="FunCoup" id="P9WGZ9">
    <property type="interactions" value="124"/>
</dbReference>
<dbReference type="STRING" id="83332.Rv2752c"/>
<dbReference type="PaxDb" id="83332-Rv2752c"/>
<dbReference type="DNASU" id="887802"/>
<dbReference type="GeneID" id="887802"/>
<dbReference type="KEGG" id="mtu:Rv2752c"/>
<dbReference type="KEGG" id="mtv:RVBD_2752c"/>
<dbReference type="TubercuList" id="Rv2752c"/>
<dbReference type="eggNOG" id="COG0595">
    <property type="taxonomic scope" value="Bacteria"/>
</dbReference>
<dbReference type="InParanoid" id="P9WGZ9"/>
<dbReference type="OrthoDB" id="9770211at2"/>
<dbReference type="PhylomeDB" id="P9WGZ9"/>
<dbReference type="Proteomes" id="UP000001584">
    <property type="component" value="Chromosome"/>
</dbReference>
<dbReference type="GO" id="GO:0005737">
    <property type="term" value="C:cytoplasm"/>
    <property type="evidence" value="ECO:0007669"/>
    <property type="project" value="UniProtKB-SubCell"/>
</dbReference>
<dbReference type="GO" id="GO:0004534">
    <property type="term" value="F:5'-3' RNA exonuclease activity"/>
    <property type="evidence" value="ECO:0007669"/>
    <property type="project" value="UniProtKB-UniRule"/>
</dbReference>
<dbReference type="GO" id="GO:0008800">
    <property type="term" value="F:beta-lactamase activity"/>
    <property type="evidence" value="ECO:0007669"/>
    <property type="project" value="UniProtKB-EC"/>
</dbReference>
<dbReference type="GO" id="GO:0003723">
    <property type="term" value="F:RNA binding"/>
    <property type="evidence" value="ECO:0007669"/>
    <property type="project" value="UniProtKB-UniRule"/>
</dbReference>
<dbReference type="GO" id="GO:0004521">
    <property type="term" value="F:RNA endonuclease activity"/>
    <property type="evidence" value="ECO:0007669"/>
    <property type="project" value="UniProtKB-UniRule"/>
</dbReference>
<dbReference type="GO" id="GO:0008270">
    <property type="term" value="F:zinc ion binding"/>
    <property type="evidence" value="ECO:0007669"/>
    <property type="project" value="InterPro"/>
</dbReference>
<dbReference type="GO" id="GO:0006364">
    <property type="term" value="P:rRNA processing"/>
    <property type="evidence" value="ECO:0007669"/>
    <property type="project" value="UniProtKB-UniRule"/>
</dbReference>
<dbReference type="CDD" id="cd07714">
    <property type="entry name" value="RNaseJ_MBL-fold"/>
    <property type="match status" value="1"/>
</dbReference>
<dbReference type="FunFam" id="3.40.50.10710:FF:000001">
    <property type="entry name" value="Ribonuclease J"/>
    <property type="match status" value="1"/>
</dbReference>
<dbReference type="Gene3D" id="3.10.20.580">
    <property type="match status" value="1"/>
</dbReference>
<dbReference type="Gene3D" id="3.40.50.10710">
    <property type="entry name" value="Metallo-hydrolase/oxidoreductase"/>
    <property type="match status" value="1"/>
</dbReference>
<dbReference type="Gene3D" id="3.60.15.10">
    <property type="entry name" value="Ribonuclease Z/Hydroxyacylglutathione hydrolase-like"/>
    <property type="match status" value="1"/>
</dbReference>
<dbReference type="HAMAP" id="MF_01491">
    <property type="entry name" value="RNase_J_bact"/>
    <property type="match status" value="1"/>
</dbReference>
<dbReference type="InterPro" id="IPR001279">
    <property type="entry name" value="Metallo-B-lactamas"/>
</dbReference>
<dbReference type="InterPro" id="IPR036866">
    <property type="entry name" value="RibonucZ/Hydroxyglut_hydro"/>
</dbReference>
<dbReference type="InterPro" id="IPR011108">
    <property type="entry name" value="RMMBL"/>
</dbReference>
<dbReference type="InterPro" id="IPR004613">
    <property type="entry name" value="RNase_J"/>
</dbReference>
<dbReference type="InterPro" id="IPR042173">
    <property type="entry name" value="RNase_J_2"/>
</dbReference>
<dbReference type="InterPro" id="IPR055132">
    <property type="entry name" value="RNase_J_b_CASP"/>
</dbReference>
<dbReference type="InterPro" id="IPR030854">
    <property type="entry name" value="RNase_J_bac"/>
</dbReference>
<dbReference type="InterPro" id="IPR041636">
    <property type="entry name" value="RNase_J_C"/>
</dbReference>
<dbReference type="NCBIfam" id="TIGR00649">
    <property type="entry name" value="MG423"/>
    <property type="match status" value="1"/>
</dbReference>
<dbReference type="PANTHER" id="PTHR43694">
    <property type="entry name" value="RIBONUCLEASE J"/>
    <property type="match status" value="1"/>
</dbReference>
<dbReference type="PANTHER" id="PTHR43694:SF1">
    <property type="entry name" value="RIBONUCLEASE J"/>
    <property type="match status" value="1"/>
</dbReference>
<dbReference type="Pfam" id="PF12706">
    <property type="entry name" value="Lactamase_B_2"/>
    <property type="match status" value="1"/>
</dbReference>
<dbReference type="Pfam" id="PF07521">
    <property type="entry name" value="RMMBL"/>
    <property type="match status" value="1"/>
</dbReference>
<dbReference type="Pfam" id="PF22505">
    <property type="entry name" value="RNase_J_b_CASP"/>
    <property type="match status" value="1"/>
</dbReference>
<dbReference type="Pfam" id="PF17770">
    <property type="entry name" value="RNase_J_C"/>
    <property type="match status" value="1"/>
</dbReference>
<dbReference type="PIRSF" id="PIRSF004803">
    <property type="entry name" value="RnjA"/>
    <property type="match status" value="1"/>
</dbReference>
<dbReference type="SMART" id="SM00849">
    <property type="entry name" value="Lactamase_B"/>
    <property type="match status" value="1"/>
</dbReference>
<dbReference type="SUPFAM" id="SSF56281">
    <property type="entry name" value="Metallo-hydrolase/oxidoreductase"/>
    <property type="match status" value="1"/>
</dbReference>